<protein>
    <recommendedName>
        <fullName evidence="4">2-(3-amino-3-carboxypropyl)histidine synthase subunit 2</fullName>
    </recommendedName>
    <alternativeName>
        <fullName>Diphthamide biosynthesis protein 2</fullName>
    </alternativeName>
    <alternativeName>
        <fullName evidence="4">Diphtheria toxin resistance protein 2</fullName>
    </alternativeName>
    <alternativeName>
        <fullName evidence="4">S-adenosyl-L-methionine:L-histidine 3-amino-3-carboxypropyltransferase 2</fullName>
    </alternativeName>
</protein>
<name>DPH2_RAT</name>
<keyword id="KW-0007">Acetylation</keyword>
<keyword id="KW-0408">Iron</keyword>
<keyword id="KW-0411">Iron-sulfur</keyword>
<keyword id="KW-0479">Metal-binding</keyword>
<keyword id="KW-0597">Phosphoprotein</keyword>
<keyword id="KW-1185">Reference proteome</keyword>
<organism>
    <name type="scientific">Rattus norvegicus</name>
    <name type="common">Rat</name>
    <dbReference type="NCBI Taxonomy" id="10116"/>
    <lineage>
        <taxon>Eukaryota</taxon>
        <taxon>Metazoa</taxon>
        <taxon>Chordata</taxon>
        <taxon>Craniata</taxon>
        <taxon>Vertebrata</taxon>
        <taxon>Euteleostomi</taxon>
        <taxon>Mammalia</taxon>
        <taxon>Eutheria</taxon>
        <taxon>Euarchontoglires</taxon>
        <taxon>Glires</taxon>
        <taxon>Rodentia</taxon>
        <taxon>Myomorpha</taxon>
        <taxon>Muroidea</taxon>
        <taxon>Muridae</taxon>
        <taxon>Murinae</taxon>
        <taxon>Rattus</taxon>
    </lineage>
</organism>
<feature type="chain" id="PRO_0000307892" description="2-(3-amino-3-carboxypropyl)histidine synthase subunit 2">
    <location>
        <begin position="1"/>
        <end position="489"/>
    </location>
</feature>
<feature type="binding site" evidence="1">
    <location>
        <position position="89"/>
    </location>
    <ligand>
        <name>[4Fe-4S] cluster</name>
        <dbReference type="ChEBI" id="CHEBI:49883"/>
    </ligand>
</feature>
<feature type="binding site" evidence="1">
    <location>
        <position position="110"/>
    </location>
    <ligand>
        <name>[4Fe-4S] cluster</name>
        <dbReference type="ChEBI" id="CHEBI:49883"/>
    </ligand>
</feature>
<feature type="binding site" evidence="1">
    <location>
        <position position="341"/>
    </location>
    <ligand>
        <name>[4Fe-4S] cluster</name>
        <dbReference type="ChEBI" id="CHEBI:49883"/>
    </ligand>
</feature>
<feature type="modified residue" description="N-acetylmethionine" evidence="2">
    <location>
        <position position="1"/>
    </location>
</feature>
<feature type="modified residue" description="Phosphoserine" evidence="2">
    <location>
        <position position="7"/>
    </location>
</feature>
<feature type="modified residue" description="Phosphothreonine" evidence="2">
    <location>
        <position position="435"/>
    </location>
</feature>
<feature type="modified residue" description="Phosphoserine" evidence="2">
    <location>
        <position position="446"/>
    </location>
</feature>
<feature type="modified residue" description="Phosphoserine" evidence="2">
    <location>
        <position position="456"/>
    </location>
</feature>
<feature type="modified residue" description="Phosphothreonine" evidence="2">
    <location>
        <position position="467"/>
    </location>
</feature>
<feature type="modified residue" description="Phosphoserine" evidence="2">
    <location>
        <position position="488"/>
    </location>
</feature>
<proteinExistence type="evidence at transcript level"/>
<gene>
    <name type="primary">Dph2</name>
</gene>
<dbReference type="EMBL" id="BC092656">
    <property type="protein sequence ID" value="AAH92656.1"/>
    <property type="molecule type" value="mRNA"/>
</dbReference>
<dbReference type="RefSeq" id="NP_001015007.1">
    <property type="nucleotide sequence ID" value="NM_001015007.1"/>
</dbReference>
<dbReference type="SMR" id="Q568Y2"/>
<dbReference type="FunCoup" id="Q568Y2">
    <property type="interactions" value="2860"/>
</dbReference>
<dbReference type="STRING" id="10116.ENSRNOP00000026739"/>
<dbReference type="GlyGen" id="Q568Y2">
    <property type="glycosylation" value="1 site"/>
</dbReference>
<dbReference type="PhosphoSitePlus" id="Q568Y2"/>
<dbReference type="jPOST" id="Q568Y2"/>
<dbReference type="PaxDb" id="10116-ENSRNOP00000026739"/>
<dbReference type="Ensembl" id="ENSRNOT00000026739.8">
    <property type="protein sequence ID" value="ENSRNOP00000026739.4"/>
    <property type="gene ID" value="ENSRNOG00000019735.8"/>
</dbReference>
<dbReference type="GeneID" id="298452"/>
<dbReference type="KEGG" id="rno:298452"/>
<dbReference type="UCSC" id="RGD:1304634">
    <property type="organism name" value="rat"/>
</dbReference>
<dbReference type="AGR" id="RGD:1304634"/>
<dbReference type="CTD" id="1802"/>
<dbReference type="RGD" id="1304634">
    <property type="gene designation" value="Dph2"/>
</dbReference>
<dbReference type="eggNOG" id="KOG2648">
    <property type="taxonomic scope" value="Eukaryota"/>
</dbReference>
<dbReference type="GeneTree" id="ENSGT00940000153694"/>
<dbReference type="HOGENOM" id="CLU_015210_0_0_1"/>
<dbReference type="InParanoid" id="Q568Y2"/>
<dbReference type="OMA" id="QIWNENH"/>
<dbReference type="OrthoDB" id="449241at2759"/>
<dbReference type="PhylomeDB" id="Q568Y2"/>
<dbReference type="TreeFam" id="TF313832"/>
<dbReference type="UniPathway" id="UPA00559"/>
<dbReference type="PRO" id="PR:Q568Y2"/>
<dbReference type="Proteomes" id="UP000002494">
    <property type="component" value="Chromosome 5"/>
</dbReference>
<dbReference type="Bgee" id="ENSRNOG00000019735">
    <property type="expression patterns" value="Expressed in thymus and 19 other cell types or tissues"/>
</dbReference>
<dbReference type="GO" id="GO:0120513">
    <property type="term" value="C:2-(3-amino-3-carboxypropyl)histidine synthase complex"/>
    <property type="evidence" value="ECO:0000250"/>
    <property type="project" value="UniProtKB"/>
</dbReference>
<dbReference type="GO" id="GO:0032991">
    <property type="term" value="C:protein-containing complex"/>
    <property type="evidence" value="ECO:0000266"/>
    <property type="project" value="RGD"/>
</dbReference>
<dbReference type="GO" id="GO:0090560">
    <property type="term" value="F:2-(3-amino-3-carboxypropyl)histidine synthase activity"/>
    <property type="evidence" value="ECO:0000266"/>
    <property type="project" value="RGD"/>
</dbReference>
<dbReference type="GO" id="GO:0051539">
    <property type="term" value="F:4 iron, 4 sulfur cluster binding"/>
    <property type="evidence" value="ECO:0000250"/>
    <property type="project" value="UniProtKB"/>
</dbReference>
<dbReference type="GO" id="GO:0046872">
    <property type="term" value="F:metal ion binding"/>
    <property type="evidence" value="ECO:0007669"/>
    <property type="project" value="UniProtKB-KW"/>
</dbReference>
<dbReference type="GO" id="GO:0017183">
    <property type="term" value="P:protein histidyl modification to diphthamide"/>
    <property type="evidence" value="ECO:0000250"/>
    <property type="project" value="UniProtKB"/>
</dbReference>
<dbReference type="FunFam" id="3.40.50.11840:FF:000002">
    <property type="entry name" value="2-(3-amino-3-carboxypropyl)histidine synthase subunit 2"/>
    <property type="match status" value="1"/>
</dbReference>
<dbReference type="FunFam" id="3.40.50.11860:FF:000001">
    <property type="entry name" value="2-(3-amino-3-carboxypropyl)histidine synthase subunit 2"/>
    <property type="match status" value="1"/>
</dbReference>
<dbReference type="Gene3D" id="3.40.50.11840">
    <property type="entry name" value="Diphthamide synthesis DPH1/DPH2 domain 1"/>
    <property type="match status" value="1"/>
</dbReference>
<dbReference type="Gene3D" id="3.40.50.11860">
    <property type="entry name" value="Diphthamide synthesis DPH1/DPH2 domain 3"/>
    <property type="match status" value="1"/>
</dbReference>
<dbReference type="InterPro" id="IPR010014">
    <property type="entry name" value="DHP2"/>
</dbReference>
<dbReference type="InterPro" id="IPR016435">
    <property type="entry name" value="DPH1/DPH2"/>
</dbReference>
<dbReference type="InterPro" id="IPR042263">
    <property type="entry name" value="DPH1/DPH2_1"/>
</dbReference>
<dbReference type="InterPro" id="IPR042265">
    <property type="entry name" value="DPH1/DPH2_3"/>
</dbReference>
<dbReference type="NCBIfam" id="TIGR00322">
    <property type="entry name" value="diphth2_R"/>
    <property type="match status" value="1"/>
</dbReference>
<dbReference type="NCBIfam" id="TIGR00272">
    <property type="entry name" value="DPH2"/>
    <property type="match status" value="1"/>
</dbReference>
<dbReference type="PANTHER" id="PTHR10762:SF2">
    <property type="entry name" value="2-(3-AMINO-3-CARBOXYPROPYL)HISTIDINE SYNTHASE SUBUNIT 2"/>
    <property type="match status" value="1"/>
</dbReference>
<dbReference type="PANTHER" id="PTHR10762">
    <property type="entry name" value="DIPHTHAMIDE BIOSYNTHESIS PROTEIN"/>
    <property type="match status" value="1"/>
</dbReference>
<dbReference type="Pfam" id="PF01866">
    <property type="entry name" value="Diphthamide_syn"/>
    <property type="match status" value="1"/>
</dbReference>
<dbReference type="SFLD" id="SFLDG01121">
    <property type="entry name" value="Diphthamide_biosynthesis"/>
    <property type="match status" value="1"/>
</dbReference>
<dbReference type="SFLD" id="SFLDF00408">
    <property type="entry name" value="Diphthamide_biosynthesis_famil"/>
    <property type="match status" value="1"/>
</dbReference>
<dbReference type="SFLD" id="SFLDS00032">
    <property type="entry name" value="Radical_SAM_3-amino-3-carboxyp"/>
    <property type="match status" value="1"/>
</dbReference>
<sequence>MESTFSSPAEAALQREAGVPGQFTPPEDLDRVYELERVTRFICDLGCQRVALQFPDQLLGDAGAVAARLEEVTGSKMFILGDTAYGSCCVDVLGAEQAGAQALVHFGPACLSPPASLLPITFVLGRRPVALELCAKAFEAQNPDPTALVVLLSEPACAHALEPLATLLRPKYQDLLISSPALPLPVGSLSSQPESLERFGRRFPLNPGRSLEEYGAFYVGASQASSDPNLDPDLSRLLLGWTPGRPFFSCCPDTGQTQDQGAKAGRLRARRLYLVERARDARVVGLLVGTLGVAQHLEALAHLRKLTEAAGKRSYVLALGKPTPAKLANFPEMDVFVLLACPLGALTLQPSGGFFRPILTPCELEAACNPAWPPPGLAPHLTHYAELLPGSPFHVPLPPPESELWDTPDVSLISGELRPPPPWKSSDDTKCSALTPRPQLELAESSPAASFLSSRSWQGLEPRLGQTPVKEAVQGRRGIAIAYEDEGSS</sequence>
<comment type="function">
    <text evidence="1">Required for the first step of diphthamide biosynthesis, a post-translational modification of histidine which occurs in elongation factor 2 (By similarity). DPH1 and DPH2 transfer a 3-amino-3-carboxypropyl (ACP) group from S-adenosyl-L-methionine (SAM) to a histidine residue, the reaction is assisted by a reduction system comprising DPH3 and a NADH-dependent reductase (By similarity). Facilitates the reduction of the catalytic iron-sulfur cluster found in the DPH1 subunit (By similarity).</text>
</comment>
<comment type="cofactor">
    <cofactor evidence="1">
        <name>[4Fe-4S] cluster</name>
        <dbReference type="ChEBI" id="CHEBI:49883"/>
    </cofactor>
    <text evidence="1">Binds 1 [4Fe-4S] cluster per subunit. The cluster facilitates the reduction of the catalytic iron-sulfur cluster in the DPH1 subunit.</text>
</comment>
<comment type="pathway">
    <text evidence="4">Protein modification; peptidyl-diphthamide biosynthesis.</text>
</comment>
<comment type="subunit">
    <text evidence="1 3">Component of the 2-(3-amino-3-carboxypropyl)histidine synthase complex composed of DPH1, DPH2, DPH3 and a NADH-dependent reductase (By similarity). Interacts with DPH1 (By similarity).</text>
</comment>
<comment type="similarity">
    <text evidence="4">Belongs to the DPH1/DPH2 family. DPH2 subfamily.</text>
</comment>
<reference key="1">
    <citation type="journal article" date="2004" name="Genome Res.">
        <title>The status, quality, and expansion of the NIH full-length cDNA project: the Mammalian Gene Collection (MGC).</title>
        <authorList>
            <consortium name="The MGC Project Team"/>
        </authorList>
    </citation>
    <scope>NUCLEOTIDE SEQUENCE [LARGE SCALE MRNA]</scope>
    <source>
        <tissue>Brain</tissue>
    </source>
</reference>
<evidence type="ECO:0000250" key="1">
    <source>
        <dbReference type="UniProtKB" id="P32461"/>
    </source>
</evidence>
<evidence type="ECO:0000250" key="2">
    <source>
        <dbReference type="UniProtKB" id="Q9BQC3"/>
    </source>
</evidence>
<evidence type="ECO:0000250" key="3">
    <source>
        <dbReference type="UniProtKB" id="Q9CR25"/>
    </source>
</evidence>
<evidence type="ECO:0000305" key="4"/>
<accession>Q568Y2</accession>